<dbReference type="EMBL" id="CP000360">
    <property type="protein sequence ID" value="ABF40196.1"/>
    <property type="molecule type" value="Genomic_DNA"/>
</dbReference>
<dbReference type="RefSeq" id="WP_011521998.1">
    <property type="nucleotide sequence ID" value="NC_008009.1"/>
</dbReference>
<dbReference type="SMR" id="Q1ISF4"/>
<dbReference type="STRING" id="204669.Acid345_1193"/>
<dbReference type="EnsemblBacteria" id="ABF40196">
    <property type="protein sequence ID" value="ABF40196"/>
    <property type="gene ID" value="Acid345_1193"/>
</dbReference>
<dbReference type="KEGG" id="aba:Acid345_1193"/>
<dbReference type="eggNOG" id="COG1381">
    <property type="taxonomic scope" value="Bacteria"/>
</dbReference>
<dbReference type="HOGENOM" id="CLU_066632_1_0_0"/>
<dbReference type="OrthoDB" id="9797083at2"/>
<dbReference type="Proteomes" id="UP000002432">
    <property type="component" value="Chromosome"/>
</dbReference>
<dbReference type="GO" id="GO:0043590">
    <property type="term" value="C:bacterial nucleoid"/>
    <property type="evidence" value="ECO:0007669"/>
    <property type="project" value="TreeGrafter"/>
</dbReference>
<dbReference type="GO" id="GO:0006310">
    <property type="term" value="P:DNA recombination"/>
    <property type="evidence" value="ECO:0007669"/>
    <property type="project" value="UniProtKB-UniRule"/>
</dbReference>
<dbReference type="GO" id="GO:0006302">
    <property type="term" value="P:double-strand break repair"/>
    <property type="evidence" value="ECO:0007669"/>
    <property type="project" value="TreeGrafter"/>
</dbReference>
<dbReference type="Gene3D" id="2.40.50.140">
    <property type="entry name" value="Nucleic acid-binding proteins"/>
    <property type="match status" value="1"/>
</dbReference>
<dbReference type="Gene3D" id="1.20.1440.120">
    <property type="entry name" value="Recombination protein O, C-terminal domain"/>
    <property type="match status" value="1"/>
</dbReference>
<dbReference type="HAMAP" id="MF_00201">
    <property type="entry name" value="RecO"/>
    <property type="match status" value="1"/>
</dbReference>
<dbReference type="InterPro" id="IPR037278">
    <property type="entry name" value="ARFGAP/RecO"/>
</dbReference>
<dbReference type="InterPro" id="IPR022572">
    <property type="entry name" value="DNA_rep/recomb_RecO_N"/>
</dbReference>
<dbReference type="InterPro" id="IPR012340">
    <property type="entry name" value="NA-bd_OB-fold"/>
</dbReference>
<dbReference type="InterPro" id="IPR003717">
    <property type="entry name" value="RecO"/>
</dbReference>
<dbReference type="InterPro" id="IPR042242">
    <property type="entry name" value="RecO_C"/>
</dbReference>
<dbReference type="NCBIfam" id="TIGR00613">
    <property type="entry name" value="reco"/>
    <property type="match status" value="1"/>
</dbReference>
<dbReference type="PANTHER" id="PTHR33991">
    <property type="entry name" value="DNA REPAIR PROTEIN RECO"/>
    <property type="match status" value="1"/>
</dbReference>
<dbReference type="PANTHER" id="PTHR33991:SF1">
    <property type="entry name" value="DNA REPAIR PROTEIN RECO"/>
    <property type="match status" value="1"/>
</dbReference>
<dbReference type="Pfam" id="PF02565">
    <property type="entry name" value="RecO_C"/>
    <property type="match status" value="1"/>
</dbReference>
<dbReference type="Pfam" id="PF11967">
    <property type="entry name" value="RecO_N"/>
    <property type="match status" value="1"/>
</dbReference>
<dbReference type="SUPFAM" id="SSF57863">
    <property type="entry name" value="ArfGap/RecO-like zinc finger"/>
    <property type="match status" value="1"/>
</dbReference>
<dbReference type="SUPFAM" id="SSF50249">
    <property type="entry name" value="Nucleic acid-binding proteins"/>
    <property type="match status" value="1"/>
</dbReference>
<sequence length="244" mass="27662">MLKQSEAIVLRTYPMREADLLVTLFTRAEGKIKGVAKAAKKSRRRFGGALEPLTHVRVYYEDRERQELTRLDSCDVLASPMSAEVDYPRALALGHVAEVIDDLLPDREPNDAVFRLSLAVLGQLVPGAVWMPLTYFDLWMVRLAGFLPDLMHCVVCGEELDDRAFFHPLVDGLVCANDKRLASTELTVESRAIADLMFRAPLENFAGAPWPRQRCADLRRFLVQILERHLEKKLVTVTMLDKLD</sequence>
<protein>
    <recommendedName>
        <fullName evidence="1">DNA repair protein RecO</fullName>
    </recommendedName>
    <alternativeName>
        <fullName evidence="1">Recombination protein O</fullName>
    </alternativeName>
</protein>
<proteinExistence type="inferred from homology"/>
<keyword id="KW-0227">DNA damage</keyword>
<keyword id="KW-0233">DNA recombination</keyword>
<keyword id="KW-0234">DNA repair</keyword>
<keyword id="KW-1185">Reference proteome</keyword>
<organism>
    <name type="scientific">Koribacter versatilis (strain Ellin345)</name>
    <dbReference type="NCBI Taxonomy" id="204669"/>
    <lineage>
        <taxon>Bacteria</taxon>
        <taxon>Pseudomonadati</taxon>
        <taxon>Acidobacteriota</taxon>
        <taxon>Terriglobia</taxon>
        <taxon>Terriglobales</taxon>
        <taxon>Candidatus Korobacteraceae</taxon>
        <taxon>Candidatus Korobacter</taxon>
    </lineage>
</organism>
<reference key="1">
    <citation type="journal article" date="2009" name="Appl. Environ. Microbiol.">
        <title>Three genomes from the phylum Acidobacteria provide insight into the lifestyles of these microorganisms in soils.</title>
        <authorList>
            <person name="Ward N.L."/>
            <person name="Challacombe J.F."/>
            <person name="Janssen P.H."/>
            <person name="Henrissat B."/>
            <person name="Coutinho P.M."/>
            <person name="Wu M."/>
            <person name="Xie G."/>
            <person name="Haft D.H."/>
            <person name="Sait M."/>
            <person name="Badger J."/>
            <person name="Barabote R.D."/>
            <person name="Bradley B."/>
            <person name="Brettin T.S."/>
            <person name="Brinkac L.M."/>
            <person name="Bruce D."/>
            <person name="Creasy T."/>
            <person name="Daugherty S.C."/>
            <person name="Davidsen T.M."/>
            <person name="DeBoy R.T."/>
            <person name="Detter J.C."/>
            <person name="Dodson R.J."/>
            <person name="Durkin A.S."/>
            <person name="Ganapathy A."/>
            <person name="Gwinn-Giglio M."/>
            <person name="Han C.S."/>
            <person name="Khouri H."/>
            <person name="Kiss H."/>
            <person name="Kothari S.P."/>
            <person name="Madupu R."/>
            <person name="Nelson K.E."/>
            <person name="Nelson W.C."/>
            <person name="Paulsen I."/>
            <person name="Penn K."/>
            <person name="Ren Q."/>
            <person name="Rosovitz M.J."/>
            <person name="Selengut J.D."/>
            <person name="Shrivastava S."/>
            <person name="Sullivan S.A."/>
            <person name="Tapia R."/>
            <person name="Thompson L.S."/>
            <person name="Watkins K.L."/>
            <person name="Yang Q."/>
            <person name="Yu C."/>
            <person name="Zafar N."/>
            <person name="Zhou L."/>
            <person name="Kuske C.R."/>
        </authorList>
    </citation>
    <scope>NUCLEOTIDE SEQUENCE [LARGE SCALE GENOMIC DNA]</scope>
    <source>
        <strain>Ellin345</strain>
    </source>
</reference>
<feature type="chain" id="PRO_0000264802" description="DNA repair protein RecO">
    <location>
        <begin position="1"/>
        <end position="244"/>
    </location>
</feature>
<accession>Q1ISF4</accession>
<gene>
    <name evidence="1" type="primary">recO</name>
    <name type="ordered locus">Acid345_1193</name>
</gene>
<evidence type="ECO:0000255" key="1">
    <source>
        <dbReference type="HAMAP-Rule" id="MF_00201"/>
    </source>
</evidence>
<comment type="function">
    <text evidence="1">Involved in DNA repair and RecF pathway recombination.</text>
</comment>
<comment type="similarity">
    <text evidence="1">Belongs to the RecO family.</text>
</comment>
<name>RECO_KORVE</name>